<feature type="chain" id="PRO_0000376517" description="Probable cell division protein WhiA">
    <location>
        <begin position="1"/>
        <end position="323"/>
    </location>
</feature>
<feature type="DNA-binding region" description="H-T-H motif" evidence="1">
    <location>
        <begin position="275"/>
        <end position="309"/>
    </location>
</feature>
<gene>
    <name evidence="1" type="primary">whiA</name>
    <name type="ordered locus">LMOf2365_2445</name>
</gene>
<evidence type="ECO:0000255" key="1">
    <source>
        <dbReference type="HAMAP-Rule" id="MF_01420"/>
    </source>
</evidence>
<organism>
    <name type="scientific">Listeria monocytogenes serotype 4b (strain F2365)</name>
    <dbReference type="NCBI Taxonomy" id="265669"/>
    <lineage>
        <taxon>Bacteria</taxon>
        <taxon>Bacillati</taxon>
        <taxon>Bacillota</taxon>
        <taxon>Bacilli</taxon>
        <taxon>Bacillales</taxon>
        <taxon>Listeriaceae</taxon>
        <taxon>Listeria</taxon>
    </lineage>
</organism>
<reference key="1">
    <citation type="journal article" date="2004" name="Nucleic Acids Res.">
        <title>Whole genome comparisons of serotype 4b and 1/2a strains of the food-borne pathogen Listeria monocytogenes reveal new insights into the core genome components of this species.</title>
        <authorList>
            <person name="Nelson K.E."/>
            <person name="Fouts D.E."/>
            <person name="Mongodin E.F."/>
            <person name="Ravel J."/>
            <person name="DeBoy R.T."/>
            <person name="Kolonay J.F."/>
            <person name="Rasko D.A."/>
            <person name="Angiuoli S.V."/>
            <person name="Gill S.R."/>
            <person name="Paulsen I.T."/>
            <person name="Peterson J.D."/>
            <person name="White O."/>
            <person name="Nelson W.C."/>
            <person name="Nierman W.C."/>
            <person name="Beanan M.J."/>
            <person name="Brinkac L.M."/>
            <person name="Daugherty S.C."/>
            <person name="Dodson R.J."/>
            <person name="Durkin A.S."/>
            <person name="Madupu R."/>
            <person name="Haft D.H."/>
            <person name="Selengut J."/>
            <person name="Van Aken S.E."/>
            <person name="Khouri H.M."/>
            <person name="Fedorova N."/>
            <person name="Forberger H.A."/>
            <person name="Tran B."/>
            <person name="Kathariou S."/>
            <person name="Wonderling L.D."/>
            <person name="Uhlich G.A."/>
            <person name="Bayles D.O."/>
            <person name="Luchansky J.B."/>
            <person name="Fraser C.M."/>
        </authorList>
    </citation>
    <scope>NUCLEOTIDE SEQUENCE [LARGE SCALE GENOMIC DNA]</scope>
    <source>
        <strain>F2365</strain>
    </source>
</reference>
<comment type="function">
    <text evidence="1">Involved in cell division and chromosome segregation.</text>
</comment>
<comment type="similarity">
    <text evidence="1">Belongs to the WhiA family.</text>
</comment>
<name>WHIA_LISMF</name>
<sequence length="323" mass="36599">MSFASETKKELTHMDVSDSDAKVELAAFIRMNGAISFSNQLVIMDVQTENAAIARRMYQLLKDLYEVPIELLVRRKMKLKKNNVYIVRLKSGTRGILEDLRILEPPMTFTKSIDRGFVKKRSAKRAYLRGAFLASGSVNNPETSSYHLEIFSVYEEHNEAICALMNQFDLNARTLERKNGFITYLKEAEKITEFLSIIGATSALLHFEDVRIMRDMRNSVNRLVNCETANLNKTINAAVRQIDNIKYIQSTVGLEALPERLREIAALRIANEDVTLKELGEMLTTGQVSKSGINHRLRKLDQIAERLRSGETPAQVGLKISNS</sequence>
<accession>Q71WV5</accession>
<proteinExistence type="inferred from homology"/>
<dbReference type="EMBL" id="AE017262">
    <property type="protein sequence ID" value="AAT05210.1"/>
    <property type="molecule type" value="Genomic_DNA"/>
</dbReference>
<dbReference type="RefSeq" id="WP_003725407.1">
    <property type="nucleotide sequence ID" value="NC_002973.6"/>
</dbReference>
<dbReference type="SMR" id="Q71WV5"/>
<dbReference type="KEGG" id="lmf:LMOf2365_2445"/>
<dbReference type="HOGENOM" id="CLU_053282_0_0_9"/>
<dbReference type="GO" id="GO:0003677">
    <property type="term" value="F:DNA binding"/>
    <property type="evidence" value="ECO:0007669"/>
    <property type="project" value="UniProtKB-UniRule"/>
</dbReference>
<dbReference type="GO" id="GO:0051301">
    <property type="term" value="P:cell division"/>
    <property type="evidence" value="ECO:0007669"/>
    <property type="project" value="UniProtKB-UniRule"/>
</dbReference>
<dbReference type="GO" id="GO:0043937">
    <property type="term" value="P:regulation of sporulation"/>
    <property type="evidence" value="ECO:0007669"/>
    <property type="project" value="InterPro"/>
</dbReference>
<dbReference type="FunFam" id="3.10.28.10:FF:000002">
    <property type="entry name" value="Probable cell division protein WhiA"/>
    <property type="match status" value="1"/>
</dbReference>
<dbReference type="Gene3D" id="3.10.28.10">
    <property type="entry name" value="Homing endonucleases"/>
    <property type="match status" value="1"/>
</dbReference>
<dbReference type="HAMAP" id="MF_01420">
    <property type="entry name" value="HTH_type_WhiA"/>
    <property type="match status" value="1"/>
</dbReference>
<dbReference type="InterPro" id="IPR027434">
    <property type="entry name" value="Homing_endonucl"/>
</dbReference>
<dbReference type="InterPro" id="IPR018478">
    <property type="entry name" value="Sporu_reg_WhiA_N_dom"/>
</dbReference>
<dbReference type="InterPro" id="IPR003802">
    <property type="entry name" value="Sporulation_regulator_WhiA"/>
</dbReference>
<dbReference type="InterPro" id="IPR023054">
    <property type="entry name" value="Sporulation_regulator_WhiA_C"/>
</dbReference>
<dbReference type="InterPro" id="IPR039518">
    <property type="entry name" value="WhiA_LAGLIDADG_dom"/>
</dbReference>
<dbReference type="NCBIfam" id="TIGR00647">
    <property type="entry name" value="DNA_bind_WhiA"/>
    <property type="match status" value="1"/>
</dbReference>
<dbReference type="PANTHER" id="PTHR37307">
    <property type="entry name" value="CELL DIVISION PROTEIN WHIA-RELATED"/>
    <property type="match status" value="1"/>
</dbReference>
<dbReference type="PANTHER" id="PTHR37307:SF1">
    <property type="entry name" value="CELL DIVISION PROTEIN WHIA-RELATED"/>
    <property type="match status" value="1"/>
</dbReference>
<dbReference type="Pfam" id="PF02650">
    <property type="entry name" value="HTH_WhiA"/>
    <property type="match status" value="1"/>
</dbReference>
<dbReference type="Pfam" id="PF14527">
    <property type="entry name" value="LAGLIDADG_WhiA"/>
    <property type="match status" value="1"/>
</dbReference>
<dbReference type="Pfam" id="PF10298">
    <property type="entry name" value="WhiA_N"/>
    <property type="match status" value="1"/>
</dbReference>
<dbReference type="SUPFAM" id="SSF55608">
    <property type="entry name" value="Homing endonucleases"/>
    <property type="match status" value="1"/>
</dbReference>
<keyword id="KW-0131">Cell cycle</keyword>
<keyword id="KW-0132">Cell division</keyword>
<keyword id="KW-0238">DNA-binding</keyword>
<protein>
    <recommendedName>
        <fullName evidence="1">Probable cell division protein WhiA</fullName>
    </recommendedName>
</protein>